<dbReference type="EMBL" id="AB237912">
    <property type="protein sequence ID" value="BAE46677.1"/>
    <property type="molecule type" value="Genomic_DNA"/>
</dbReference>
<dbReference type="RefSeq" id="YP_358702.1">
    <property type="nucleotide sequence ID" value="NC_007500.1"/>
</dbReference>
<dbReference type="SMR" id="Q3C1K6"/>
<dbReference type="GeneID" id="3735082"/>
<dbReference type="KEGG" id="nsy:3735082"/>
<dbReference type="OrthoDB" id="27802at4085"/>
<dbReference type="Proteomes" id="UP000189701">
    <property type="component" value="Chloroplast Pltd"/>
</dbReference>
<dbReference type="GO" id="GO:0009507">
    <property type="term" value="C:chloroplast"/>
    <property type="evidence" value="ECO:0007669"/>
    <property type="project" value="UniProtKB-SubCell"/>
</dbReference>
<dbReference type="GO" id="GO:1990904">
    <property type="term" value="C:ribonucleoprotein complex"/>
    <property type="evidence" value="ECO:0007669"/>
    <property type="project" value="UniProtKB-KW"/>
</dbReference>
<dbReference type="GO" id="GO:0005840">
    <property type="term" value="C:ribosome"/>
    <property type="evidence" value="ECO:0007669"/>
    <property type="project" value="UniProtKB-KW"/>
</dbReference>
<dbReference type="GO" id="GO:0019843">
    <property type="term" value="F:rRNA binding"/>
    <property type="evidence" value="ECO:0007669"/>
    <property type="project" value="UniProtKB-UniRule"/>
</dbReference>
<dbReference type="GO" id="GO:0003735">
    <property type="term" value="F:structural constituent of ribosome"/>
    <property type="evidence" value="ECO:0007669"/>
    <property type="project" value="InterPro"/>
</dbReference>
<dbReference type="GO" id="GO:0000027">
    <property type="term" value="P:ribosomal large subunit assembly"/>
    <property type="evidence" value="ECO:0007669"/>
    <property type="project" value="UniProtKB-UniRule"/>
</dbReference>
<dbReference type="GO" id="GO:0006412">
    <property type="term" value="P:translation"/>
    <property type="evidence" value="ECO:0007669"/>
    <property type="project" value="InterPro"/>
</dbReference>
<dbReference type="CDD" id="cd07026">
    <property type="entry name" value="Ribosomal_L20"/>
    <property type="match status" value="1"/>
</dbReference>
<dbReference type="FunFam" id="1.10.1900.20:FF:000001">
    <property type="entry name" value="50S ribosomal protein L20"/>
    <property type="match status" value="1"/>
</dbReference>
<dbReference type="Gene3D" id="6.10.160.10">
    <property type="match status" value="1"/>
</dbReference>
<dbReference type="Gene3D" id="1.10.1900.20">
    <property type="entry name" value="Ribosomal protein L20"/>
    <property type="match status" value="1"/>
</dbReference>
<dbReference type="HAMAP" id="MF_00382">
    <property type="entry name" value="Ribosomal_bL20"/>
    <property type="match status" value="1"/>
</dbReference>
<dbReference type="InterPro" id="IPR005813">
    <property type="entry name" value="Ribosomal_bL20"/>
</dbReference>
<dbReference type="InterPro" id="IPR049946">
    <property type="entry name" value="RIBOSOMAL_L20_CS"/>
</dbReference>
<dbReference type="InterPro" id="IPR035566">
    <property type="entry name" value="Ribosomal_protein_bL20_C"/>
</dbReference>
<dbReference type="NCBIfam" id="TIGR01032">
    <property type="entry name" value="rplT_bact"/>
    <property type="match status" value="1"/>
</dbReference>
<dbReference type="PANTHER" id="PTHR10986">
    <property type="entry name" value="39S RIBOSOMAL PROTEIN L20"/>
    <property type="match status" value="1"/>
</dbReference>
<dbReference type="Pfam" id="PF00453">
    <property type="entry name" value="Ribosomal_L20"/>
    <property type="match status" value="1"/>
</dbReference>
<dbReference type="PRINTS" id="PR00062">
    <property type="entry name" value="RIBOSOMALL20"/>
</dbReference>
<dbReference type="SUPFAM" id="SSF74731">
    <property type="entry name" value="Ribosomal protein L20"/>
    <property type="match status" value="1"/>
</dbReference>
<dbReference type="PROSITE" id="PS00937">
    <property type="entry name" value="RIBOSOMAL_L20"/>
    <property type="match status" value="1"/>
</dbReference>
<comment type="function">
    <text evidence="1">Binds directly to 23S ribosomal RNA and is necessary for the in vitro assembly process of the 50S ribosomal subunit. It is not involved in the protein synthesizing functions of that subunit.</text>
</comment>
<comment type="subcellular location">
    <subcellularLocation>
        <location>Plastid</location>
        <location>Chloroplast</location>
    </subcellularLocation>
</comment>
<comment type="similarity">
    <text evidence="1">Belongs to the bacterial ribosomal protein bL20 family.</text>
</comment>
<protein>
    <recommendedName>
        <fullName evidence="1">Large ribosomal subunit protein bL20c</fullName>
    </recommendedName>
    <alternativeName>
        <fullName evidence="2">50S ribosomal protein L20, chloroplastic</fullName>
    </alternativeName>
</protein>
<gene>
    <name evidence="1" type="primary">rpl20</name>
</gene>
<sequence>MTRIKRGYIARRRRTKIRLFASSFRGAHSRLTRTITQQKIRALVSAHRDRDRKKRDFRRLWITRINAVIRERGVSYSYSRLIHDLYKRQLLLNRKILAQIAISNRNCLYMISNEIIKEVDWKESTRII</sequence>
<geneLocation type="chloroplast"/>
<feature type="chain" id="PRO_0000276416" description="Large ribosomal subunit protein bL20c">
    <location>
        <begin position="1"/>
        <end position="128"/>
    </location>
</feature>
<keyword id="KW-0150">Chloroplast</keyword>
<keyword id="KW-0934">Plastid</keyword>
<keyword id="KW-1185">Reference proteome</keyword>
<keyword id="KW-0687">Ribonucleoprotein</keyword>
<keyword id="KW-0689">Ribosomal protein</keyword>
<keyword id="KW-0694">RNA-binding</keyword>
<keyword id="KW-0699">rRNA-binding</keyword>
<reference key="1">
    <citation type="journal article" date="2006" name="Mol. Genet. Genomics">
        <title>The chloroplast genome of Nicotiana sylvestris and Nicotiana tomentosiformis: complete sequencing confirms that the Nicotiana sylvestris progenitor is the maternal genome donor of Nicotiana tabacum.</title>
        <authorList>
            <person name="Yukawa M."/>
            <person name="Tsudzuki T."/>
            <person name="Sugiura M."/>
        </authorList>
    </citation>
    <scope>NUCLEOTIDE SEQUENCE [LARGE SCALE GENOMIC DNA]</scope>
</reference>
<name>RK20_NICSY</name>
<accession>Q3C1K6</accession>
<proteinExistence type="inferred from homology"/>
<evidence type="ECO:0000255" key="1">
    <source>
        <dbReference type="HAMAP-Rule" id="MF_00382"/>
    </source>
</evidence>
<evidence type="ECO:0000305" key="2"/>
<organism>
    <name type="scientific">Nicotiana sylvestris</name>
    <name type="common">Wood tobacco</name>
    <name type="synonym">South American tobacco</name>
    <dbReference type="NCBI Taxonomy" id="4096"/>
    <lineage>
        <taxon>Eukaryota</taxon>
        <taxon>Viridiplantae</taxon>
        <taxon>Streptophyta</taxon>
        <taxon>Embryophyta</taxon>
        <taxon>Tracheophyta</taxon>
        <taxon>Spermatophyta</taxon>
        <taxon>Magnoliopsida</taxon>
        <taxon>eudicotyledons</taxon>
        <taxon>Gunneridae</taxon>
        <taxon>Pentapetalae</taxon>
        <taxon>asterids</taxon>
        <taxon>lamiids</taxon>
        <taxon>Solanales</taxon>
        <taxon>Solanaceae</taxon>
        <taxon>Nicotianoideae</taxon>
        <taxon>Nicotianeae</taxon>
        <taxon>Nicotiana</taxon>
    </lineage>
</organism>